<feature type="chain" id="PRO_0000169705" description="Uncharacterized protein HI_0431">
    <location>
        <begin position="1"/>
        <end position="196"/>
    </location>
</feature>
<evidence type="ECO:0000305" key="1"/>
<proteinExistence type="evidence at protein level"/>
<keyword id="KW-1185">Reference proteome</keyword>
<gene>
    <name type="ordered locus">HI_0431</name>
</gene>
<sequence length="196" mass="22721">MRNPIHKRLENLESWQHLTFMAALCERMAPNFKLFCQMNELSAETKTYQNILNLVWEYLTVKDVKINFENQLEKLETIIPDVNDYDSFGVVPALDACQALAEILHAIIAGETLEKAVEISLISLGTIRVLLETETGRDWSESKLKENEDIQTELDVQWQVYRLLKECEKRDIELILALKNEIRTEGISNIGIEFHQ</sequence>
<accession>P44709</accession>
<dbReference type="EMBL" id="L42023">
    <property type="protein sequence ID" value="AAC22090.1"/>
    <property type="molecule type" value="Genomic_DNA"/>
</dbReference>
<dbReference type="PIR" id="E64152">
    <property type="entry name" value="E64152"/>
</dbReference>
<dbReference type="RefSeq" id="NP_438592.1">
    <property type="nucleotide sequence ID" value="NC_000907.1"/>
</dbReference>
<dbReference type="SMR" id="P44709"/>
<dbReference type="STRING" id="71421.HI_0431"/>
<dbReference type="DNASU" id="950606"/>
<dbReference type="EnsemblBacteria" id="AAC22090">
    <property type="protein sequence ID" value="AAC22090"/>
    <property type="gene ID" value="HI_0431"/>
</dbReference>
<dbReference type="KEGG" id="hin:HI_0431"/>
<dbReference type="PATRIC" id="fig|71421.8.peg.451"/>
<dbReference type="eggNOG" id="COG3068">
    <property type="taxonomic scope" value="Bacteria"/>
</dbReference>
<dbReference type="HOGENOM" id="CLU_096082_0_0_6"/>
<dbReference type="OrthoDB" id="9204516at2"/>
<dbReference type="PhylomeDB" id="P44709"/>
<dbReference type="BioCyc" id="HINF71421:G1GJ1-446-MONOMER"/>
<dbReference type="Proteomes" id="UP000000579">
    <property type="component" value="Chromosome"/>
</dbReference>
<dbReference type="Gene3D" id="1.20.1590.10">
    <property type="entry name" value="YP_001051499.1 domain like"/>
    <property type="match status" value="1"/>
</dbReference>
<dbReference type="InterPro" id="IPR007338">
    <property type="entry name" value="DUF416"/>
</dbReference>
<dbReference type="InterPro" id="IPR023381">
    <property type="entry name" value="YP001051499.1-like_dom_sf"/>
</dbReference>
<dbReference type="Pfam" id="PF04222">
    <property type="entry name" value="DUF416"/>
    <property type="match status" value="1"/>
</dbReference>
<protein>
    <recommendedName>
        <fullName>Uncharacterized protein HI_0431</fullName>
    </recommendedName>
</protein>
<organism>
    <name type="scientific">Haemophilus influenzae (strain ATCC 51907 / DSM 11121 / KW20 / Rd)</name>
    <dbReference type="NCBI Taxonomy" id="71421"/>
    <lineage>
        <taxon>Bacteria</taxon>
        <taxon>Pseudomonadati</taxon>
        <taxon>Pseudomonadota</taxon>
        <taxon>Gammaproteobacteria</taxon>
        <taxon>Pasteurellales</taxon>
        <taxon>Pasteurellaceae</taxon>
        <taxon>Haemophilus</taxon>
    </lineage>
</organism>
<comment type="similarity">
    <text evidence="1">To E.coli YjaG.</text>
</comment>
<name>Y431_HAEIN</name>
<reference key="1">
    <citation type="journal article" date="1995" name="Science">
        <title>Whole-genome random sequencing and assembly of Haemophilus influenzae Rd.</title>
        <authorList>
            <person name="Fleischmann R.D."/>
            <person name="Adams M.D."/>
            <person name="White O."/>
            <person name="Clayton R.A."/>
            <person name="Kirkness E.F."/>
            <person name="Kerlavage A.R."/>
            <person name="Bult C.J."/>
            <person name="Tomb J.-F."/>
            <person name="Dougherty B.A."/>
            <person name="Merrick J.M."/>
            <person name="McKenney K."/>
            <person name="Sutton G.G."/>
            <person name="FitzHugh W."/>
            <person name="Fields C.A."/>
            <person name="Gocayne J.D."/>
            <person name="Scott J.D."/>
            <person name="Shirley R."/>
            <person name="Liu L.-I."/>
            <person name="Glodek A."/>
            <person name="Kelley J.M."/>
            <person name="Weidman J.F."/>
            <person name="Phillips C.A."/>
            <person name="Spriggs T."/>
            <person name="Hedblom E."/>
            <person name="Cotton M.D."/>
            <person name="Utterback T.R."/>
            <person name="Hanna M.C."/>
            <person name="Nguyen D.T."/>
            <person name="Saudek D.M."/>
            <person name="Brandon R.C."/>
            <person name="Fine L.D."/>
            <person name="Fritchman J.L."/>
            <person name="Fuhrmann J.L."/>
            <person name="Geoghagen N.S.M."/>
            <person name="Gnehm C.L."/>
            <person name="McDonald L.A."/>
            <person name="Small K.V."/>
            <person name="Fraser C.M."/>
            <person name="Smith H.O."/>
            <person name="Venter J.C."/>
        </authorList>
    </citation>
    <scope>NUCLEOTIDE SEQUENCE [LARGE SCALE GENOMIC DNA]</scope>
    <source>
        <strain>ATCC 51907 / DSM 11121 / KW20 / Rd</strain>
    </source>
</reference>
<reference key="2">
    <citation type="journal article" date="2000" name="Electrophoresis">
        <title>Two-dimensional map of the proteome of Haemophilus influenzae.</title>
        <authorList>
            <person name="Langen H."/>
            <person name="Takacs B."/>
            <person name="Evers S."/>
            <person name="Berndt P."/>
            <person name="Lahm H.W."/>
            <person name="Wipf B."/>
            <person name="Gray C."/>
            <person name="Fountoulakis M."/>
        </authorList>
    </citation>
    <scope>IDENTIFICATION BY MASS SPECTROMETRY</scope>
    <source>
        <strain>ATCC 51907 / DSM 11121 / KW20 / Rd</strain>
    </source>
</reference>